<sequence length="148" mass="17222">MALYEHVFLARQDLSAQQVDALVEQYKGVIESGGGKVGRIENWGVKSLAYRIKKNRKAYFTLMDLDAPAEAVKEMERQMGISEDILRFMTIRVEAHEEGPSAMLQRRDDRERGDRGDRGPRRDFDDRGPRRPREDDRPRRSREDEGDE</sequence>
<proteinExistence type="inferred from homology"/>
<name>RS6_CHESB</name>
<evidence type="ECO:0000255" key="1">
    <source>
        <dbReference type="HAMAP-Rule" id="MF_00360"/>
    </source>
</evidence>
<evidence type="ECO:0000256" key="2">
    <source>
        <dbReference type="SAM" id="MobiDB-lite"/>
    </source>
</evidence>
<evidence type="ECO:0000305" key="3"/>
<dbReference type="EMBL" id="CP000390">
    <property type="protein sequence ID" value="ABG63309.1"/>
    <property type="molecule type" value="Genomic_DNA"/>
</dbReference>
<dbReference type="SMR" id="Q11H16"/>
<dbReference type="STRING" id="266779.Meso_1916"/>
<dbReference type="KEGG" id="mes:Meso_1916"/>
<dbReference type="eggNOG" id="COG0360">
    <property type="taxonomic scope" value="Bacteria"/>
</dbReference>
<dbReference type="HOGENOM" id="CLU_113441_2_0_5"/>
<dbReference type="OrthoDB" id="9812702at2"/>
<dbReference type="GO" id="GO:0022627">
    <property type="term" value="C:cytosolic small ribosomal subunit"/>
    <property type="evidence" value="ECO:0007669"/>
    <property type="project" value="TreeGrafter"/>
</dbReference>
<dbReference type="GO" id="GO:0070181">
    <property type="term" value="F:small ribosomal subunit rRNA binding"/>
    <property type="evidence" value="ECO:0007669"/>
    <property type="project" value="TreeGrafter"/>
</dbReference>
<dbReference type="GO" id="GO:0003735">
    <property type="term" value="F:structural constituent of ribosome"/>
    <property type="evidence" value="ECO:0007669"/>
    <property type="project" value="InterPro"/>
</dbReference>
<dbReference type="GO" id="GO:0006412">
    <property type="term" value="P:translation"/>
    <property type="evidence" value="ECO:0007669"/>
    <property type="project" value="UniProtKB-UniRule"/>
</dbReference>
<dbReference type="CDD" id="cd00473">
    <property type="entry name" value="bS6"/>
    <property type="match status" value="1"/>
</dbReference>
<dbReference type="Gene3D" id="3.30.70.60">
    <property type="match status" value="1"/>
</dbReference>
<dbReference type="HAMAP" id="MF_00360">
    <property type="entry name" value="Ribosomal_bS6"/>
    <property type="match status" value="1"/>
</dbReference>
<dbReference type="InterPro" id="IPR000529">
    <property type="entry name" value="Ribosomal_bS6"/>
</dbReference>
<dbReference type="InterPro" id="IPR035980">
    <property type="entry name" value="Ribosomal_bS6_sf"/>
</dbReference>
<dbReference type="InterPro" id="IPR020814">
    <property type="entry name" value="Ribosomal_S6_plastid/chlpt"/>
</dbReference>
<dbReference type="InterPro" id="IPR014717">
    <property type="entry name" value="Transl_elong_EF1B/ribsomal_bS6"/>
</dbReference>
<dbReference type="NCBIfam" id="TIGR00166">
    <property type="entry name" value="S6"/>
    <property type="match status" value="1"/>
</dbReference>
<dbReference type="PANTHER" id="PTHR21011">
    <property type="entry name" value="MITOCHONDRIAL 28S RIBOSOMAL PROTEIN S6"/>
    <property type="match status" value="1"/>
</dbReference>
<dbReference type="PANTHER" id="PTHR21011:SF1">
    <property type="entry name" value="SMALL RIBOSOMAL SUBUNIT PROTEIN BS6M"/>
    <property type="match status" value="1"/>
</dbReference>
<dbReference type="Pfam" id="PF01250">
    <property type="entry name" value="Ribosomal_S6"/>
    <property type="match status" value="1"/>
</dbReference>
<dbReference type="SUPFAM" id="SSF54995">
    <property type="entry name" value="Ribosomal protein S6"/>
    <property type="match status" value="1"/>
</dbReference>
<accession>Q11H16</accession>
<keyword id="KW-0687">Ribonucleoprotein</keyword>
<keyword id="KW-0689">Ribosomal protein</keyword>
<keyword id="KW-0694">RNA-binding</keyword>
<keyword id="KW-0699">rRNA-binding</keyword>
<feature type="chain" id="PRO_1000005294" description="Small ribosomal subunit protein bS6">
    <location>
        <begin position="1"/>
        <end position="148"/>
    </location>
</feature>
<feature type="region of interest" description="Disordered" evidence="2">
    <location>
        <begin position="97"/>
        <end position="148"/>
    </location>
</feature>
<reference key="1">
    <citation type="submission" date="2006-06" db="EMBL/GenBank/DDBJ databases">
        <title>Complete sequence of chromosome of Mesorhizobium sp. BNC1.</title>
        <authorList>
            <consortium name="US DOE Joint Genome Institute"/>
            <person name="Copeland A."/>
            <person name="Lucas S."/>
            <person name="Lapidus A."/>
            <person name="Barry K."/>
            <person name="Detter J.C."/>
            <person name="Glavina del Rio T."/>
            <person name="Hammon N."/>
            <person name="Israni S."/>
            <person name="Dalin E."/>
            <person name="Tice H."/>
            <person name="Pitluck S."/>
            <person name="Chertkov O."/>
            <person name="Brettin T."/>
            <person name="Bruce D."/>
            <person name="Han C."/>
            <person name="Tapia R."/>
            <person name="Gilna P."/>
            <person name="Schmutz J."/>
            <person name="Larimer F."/>
            <person name="Land M."/>
            <person name="Hauser L."/>
            <person name="Kyrpides N."/>
            <person name="Mikhailova N."/>
            <person name="Richardson P."/>
        </authorList>
    </citation>
    <scope>NUCLEOTIDE SEQUENCE [LARGE SCALE GENOMIC DNA]</scope>
    <source>
        <strain>BNC1</strain>
    </source>
</reference>
<comment type="function">
    <text evidence="1">Binds together with bS18 to 16S ribosomal RNA.</text>
</comment>
<comment type="similarity">
    <text evidence="1">Belongs to the bacterial ribosomal protein bS6 family.</text>
</comment>
<gene>
    <name evidence="1" type="primary">rpsF</name>
    <name type="ordered locus">Meso_1916</name>
</gene>
<organism>
    <name type="scientific">Chelativorans sp. (strain BNC1)</name>
    <dbReference type="NCBI Taxonomy" id="266779"/>
    <lineage>
        <taxon>Bacteria</taxon>
        <taxon>Pseudomonadati</taxon>
        <taxon>Pseudomonadota</taxon>
        <taxon>Alphaproteobacteria</taxon>
        <taxon>Hyphomicrobiales</taxon>
        <taxon>Phyllobacteriaceae</taxon>
        <taxon>Chelativorans</taxon>
    </lineage>
</organism>
<protein>
    <recommendedName>
        <fullName evidence="1">Small ribosomal subunit protein bS6</fullName>
    </recommendedName>
    <alternativeName>
        <fullName evidence="3">30S ribosomal protein S6</fullName>
    </alternativeName>
</protein>